<reference key="1">
    <citation type="journal article" date="2001" name="Microb. Drug Resist.">
        <title>Annotated draft genomic sequence from a Streptococcus pneumoniae type 19F clinical isolate.</title>
        <authorList>
            <person name="Dopazo J."/>
            <person name="Mendoza A."/>
            <person name="Herrero J."/>
            <person name="Caldara F."/>
            <person name="Humbert Y."/>
            <person name="Friedli L."/>
            <person name="Guerrier M."/>
            <person name="Grand-Schenk E."/>
            <person name="Gandin C."/>
            <person name="de Francesco M."/>
            <person name="Polissi A."/>
            <person name="Buell G."/>
            <person name="Feger G."/>
            <person name="Garcia E."/>
            <person name="Peitsch M."/>
            <person name="Garcia-Bustos J.F."/>
        </authorList>
    </citation>
    <scope>NUCLEOTIDE SEQUENCE [LARGE SCALE GENOMIC DNA]</scope>
    <source>
        <strain>G54</strain>
    </source>
</reference>
<reference key="2">
    <citation type="submission" date="2008-03" db="EMBL/GenBank/DDBJ databases">
        <title>Pneumococcal beta glucoside metabolism investigated by whole genome comparison.</title>
        <authorList>
            <person name="Mulas L."/>
            <person name="Trappetti C."/>
            <person name="Hakenbeck R."/>
            <person name="Iannelli F."/>
            <person name="Pozzi G."/>
            <person name="Davidsen T.M."/>
            <person name="Tettelin H."/>
            <person name="Oggioni M."/>
        </authorList>
    </citation>
    <scope>NUCLEOTIDE SEQUENCE [LARGE SCALE GENOMIC DNA]</scope>
    <source>
        <strain>G54</strain>
    </source>
</reference>
<proteinExistence type="inferred from homology"/>
<feature type="chain" id="PRO_1000121494" description="Large ribosomal subunit protein bL12">
    <location>
        <begin position="1"/>
        <end position="122"/>
    </location>
</feature>
<sequence length="122" mass="12442">MALNIENIIAEIKEASILELNDLVKAIEEEFGVTAAAPVAVAAADAADAGAAKDSFDVELTSAGDKKVGVIKVVREITGLGLKEAKELVDGAPALVKEGVATAEAEEIKAKLEEAGASVTLK</sequence>
<accession>B5E5F0</accession>
<name>RL7_STRP4</name>
<keyword id="KW-0687">Ribonucleoprotein</keyword>
<keyword id="KW-0689">Ribosomal protein</keyword>
<evidence type="ECO:0000255" key="1">
    <source>
        <dbReference type="HAMAP-Rule" id="MF_00368"/>
    </source>
</evidence>
<evidence type="ECO:0000305" key="2"/>
<organism>
    <name type="scientific">Streptococcus pneumoniae serotype 19F (strain G54)</name>
    <dbReference type="NCBI Taxonomy" id="512566"/>
    <lineage>
        <taxon>Bacteria</taxon>
        <taxon>Bacillati</taxon>
        <taxon>Bacillota</taxon>
        <taxon>Bacilli</taxon>
        <taxon>Lactobacillales</taxon>
        <taxon>Streptococcaceae</taxon>
        <taxon>Streptococcus</taxon>
    </lineage>
</organism>
<protein>
    <recommendedName>
        <fullName evidence="1">Large ribosomal subunit protein bL12</fullName>
    </recommendedName>
    <alternativeName>
        <fullName evidence="2">50S ribosomal protein L7/L12</fullName>
    </alternativeName>
</protein>
<gene>
    <name evidence="1" type="primary">rplL</name>
    <name type="ordered locus">SPG_1294</name>
</gene>
<comment type="function">
    <text evidence="1">Forms part of the ribosomal stalk which helps the ribosome interact with GTP-bound translation factors. Is thus essential for accurate translation.</text>
</comment>
<comment type="subunit">
    <text evidence="1">Homodimer. Part of the ribosomal stalk of the 50S ribosomal subunit. Forms a multimeric L10(L12)X complex, where L10 forms an elongated spine to which 2 to 4 L12 dimers bind in a sequential fashion. Binds GTP-bound translation factors.</text>
</comment>
<comment type="similarity">
    <text evidence="1">Belongs to the bacterial ribosomal protein bL12 family.</text>
</comment>
<dbReference type="EMBL" id="CP001015">
    <property type="protein sequence ID" value="ACF56728.1"/>
    <property type="molecule type" value="Genomic_DNA"/>
</dbReference>
<dbReference type="SMR" id="B5E5F0"/>
<dbReference type="KEGG" id="spx:SPG_1294"/>
<dbReference type="HOGENOM" id="CLU_086499_3_2_9"/>
<dbReference type="GO" id="GO:0022625">
    <property type="term" value="C:cytosolic large ribosomal subunit"/>
    <property type="evidence" value="ECO:0007669"/>
    <property type="project" value="TreeGrafter"/>
</dbReference>
<dbReference type="GO" id="GO:0003729">
    <property type="term" value="F:mRNA binding"/>
    <property type="evidence" value="ECO:0007669"/>
    <property type="project" value="TreeGrafter"/>
</dbReference>
<dbReference type="GO" id="GO:0003735">
    <property type="term" value="F:structural constituent of ribosome"/>
    <property type="evidence" value="ECO:0007669"/>
    <property type="project" value="InterPro"/>
</dbReference>
<dbReference type="GO" id="GO:0006412">
    <property type="term" value="P:translation"/>
    <property type="evidence" value="ECO:0007669"/>
    <property type="project" value="UniProtKB-UniRule"/>
</dbReference>
<dbReference type="CDD" id="cd00387">
    <property type="entry name" value="Ribosomal_L7_L12"/>
    <property type="match status" value="1"/>
</dbReference>
<dbReference type="FunFam" id="1.20.5.710:FF:000002">
    <property type="entry name" value="50S ribosomal protein L7/L12"/>
    <property type="match status" value="1"/>
</dbReference>
<dbReference type="FunFam" id="3.30.1390.10:FF:000001">
    <property type="entry name" value="50S ribosomal protein L7/L12"/>
    <property type="match status" value="1"/>
</dbReference>
<dbReference type="Gene3D" id="3.30.1390.10">
    <property type="match status" value="1"/>
</dbReference>
<dbReference type="Gene3D" id="1.20.5.710">
    <property type="entry name" value="Single helix bin"/>
    <property type="match status" value="1"/>
</dbReference>
<dbReference type="HAMAP" id="MF_00368">
    <property type="entry name" value="Ribosomal_bL12"/>
    <property type="match status" value="1"/>
</dbReference>
<dbReference type="InterPro" id="IPR000206">
    <property type="entry name" value="Ribosomal_bL12"/>
</dbReference>
<dbReference type="InterPro" id="IPR013823">
    <property type="entry name" value="Ribosomal_bL12_C"/>
</dbReference>
<dbReference type="InterPro" id="IPR014719">
    <property type="entry name" value="Ribosomal_bL12_C/ClpS-like"/>
</dbReference>
<dbReference type="InterPro" id="IPR008932">
    <property type="entry name" value="Ribosomal_bL12_oligo"/>
</dbReference>
<dbReference type="InterPro" id="IPR036235">
    <property type="entry name" value="Ribosomal_bL12_oligo_N_sf"/>
</dbReference>
<dbReference type="NCBIfam" id="TIGR00855">
    <property type="entry name" value="L12"/>
    <property type="match status" value="1"/>
</dbReference>
<dbReference type="PANTHER" id="PTHR45987">
    <property type="entry name" value="39S RIBOSOMAL PROTEIN L12"/>
    <property type="match status" value="1"/>
</dbReference>
<dbReference type="PANTHER" id="PTHR45987:SF4">
    <property type="entry name" value="LARGE RIBOSOMAL SUBUNIT PROTEIN BL12M"/>
    <property type="match status" value="1"/>
</dbReference>
<dbReference type="Pfam" id="PF00542">
    <property type="entry name" value="Ribosomal_L12"/>
    <property type="match status" value="1"/>
</dbReference>
<dbReference type="Pfam" id="PF16320">
    <property type="entry name" value="Ribosomal_L12_N"/>
    <property type="match status" value="1"/>
</dbReference>
<dbReference type="SUPFAM" id="SSF54736">
    <property type="entry name" value="ClpS-like"/>
    <property type="match status" value="1"/>
</dbReference>
<dbReference type="SUPFAM" id="SSF48300">
    <property type="entry name" value="Ribosomal protein L7/12, oligomerisation (N-terminal) domain"/>
    <property type="match status" value="1"/>
</dbReference>